<sequence>MENFILYEEIGRGSKSVVYKGRRKGTINFVAILCTDKCKRPEITNWVRLTHEIKHKNIVTFHEWYETSNHLWLVVELCTGGSLKTVIAQDENLPEDVVREFGIDLISGLHHLHKLGILFCDISPRKILLEGPGTLKFSNFCLAKVEGENLEEFFALVAAEEGGGDSGENVLKKSMKSRVKGSPVYTAPEVVRGAEFSISSDLWSVGCLLYEMFSGKPPFFSESISELTEKILCEDPLPPIPKDSSCPKASSDFTNLLDGLLQRDPQKRLTWTRLLQHSFWKKAFAGADQESSVEDLSLSRNTMECSGPQDSKELLQNSQSRQAKGHKSGQRLGHYFRLENPTEFRPKSTLEGQLNESMFLLSSRPTPRTSTAVEVSPGEDRTHCSPQKTSPLTKITSGRLSQQDLESQMRELIYTDSDLVVTPIIDNPKIMKQPPVKFDPKILHLPAYSVDKLLFLKDQDWNDFLQQVCSQIDSTEKSMGASRAKLNLLCYLCMVAGHQEVATRLLHSPLFKLLIQHLRIAPNWDIRAKVARVIGLLASHTTELQENTPVVEAIVLLTELIRENFRNSKLKQCLLPTLGELIYLVATQEEKKKNPRECWAFPLAAYTVLMRCLREGEERVVNHMAAKIIENVCTTFSAQAQGFITGEIGPILWYLFRHSTADSLRITAVSALCRITRHSPTAFQNVIEKVGLNSVINSLASAICKVQQYMLTLFTAMLSCGVHLQRLIQEKDFVSTIIRLLESPSTYIRAKAFLVLLYILIYNREMLLLSCQARLVMYIERDSRKITPGKEQQSGNEYLSKCLDLLIRHIVQELPRILGDILNSLANVSGRKHPSTVQVKQLKMCLPLMPIVLHLVTSQVFRPQVVTEEFLFSYGTILSHIKSVDSGETNIDGAIGLTASEEFIKITLSAFEAIIQYPILLKDYRSTVVDYILPPLVSLVQSQNVEWRLFSLRLLSETTSLLVNQEFGDGKEKASVDSDSNLLALIRDVLLPQYEHILVEPDPVPAYALKLLVAMTEHNPTFTRLVEESKLIPLIFEVTLEHQESILGNTMQSVIALLNNLVACKDSNMKLLYEQGLVSHICNLLTETATLCLDVDNKNNNEMAAALLFSLLDILHSMLTYTSGIVRLALQTQKSGSGEDIQAAEDLLLLNRPLTDLISLLIPLLPNEDPEIFDVSSKCLSILVQLYGGENPDSLSPENVEIFAHLLTSKEDPKEQKLLLRILRRMITSNEKHLESLKNAGSLLRALERLAPGSGSFADSVVAPLALEILQAVGR</sequence>
<keyword id="KW-0067">ATP-binding</keyword>
<keyword id="KW-0418">Kinase</keyword>
<keyword id="KW-0547">Nucleotide-binding</keyword>
<keyword id="KW-1185">Reference proteome</keyword>
<keyword id="KW-0677">Repeat</keyword>
<keyword id="KW-0723">Serine/threonine-protein kinase</keyword>
<keyword id="KW-0808">Transferase</keyword>
<organism>
    <name type="scientific">Pongo abelii</name>
    <name type="common">Sumatran orangutan</name>
    <name type="synonym">Pongo pygmaeus abelii</name>
    <dbReference type="NCBI Taxonomy" id="9601"/>
    <lineage>
        <taxon>Eukaryota</taxon>
        <taxon>Metazoa</taxon>
        <taxon>Chordata</taxon>
        <taxon>Craniata</taxon>
        <taxon>Vertebrata</taxon>
        <taxon>Euteleostomi</taxon>
        <taxon>Mammalia</taxon>
        <taxon>Eutheria</taxon>
        <taxon>Euarchontoglires</taxon>
        <taxon>Primates</taxon>
        <taxon>Haplorrhini</taxon>
        <taxon>Catarrhini</taxon>
        <taxon>Hominidae</taxon>
        <taxon>Pongo</taxon>
    </lineage>
</organism>
<feature type="chain" id="PRO_0000250155" description="Serine/threonine-protein kinase ULK4">
    <location>
        <begin position="1"/>
        <end position="1275"/>
    </location>
</feature>
<feature type="domain" description="Protein kinase" evidence="2">
    <location>
        <begin position="4"/>
        <end position="280"/>
    </location>
</feature>
<feature type="repeat" description="HEAT 1">
    <location>
        <begin position="727"/>
        <end position="765"/>
    </location>
</feature>
<feature type="repeat" description="HEAT 2">
    <location>
        <begin position="842"/>
        <end position="880"/>
    </location>
</feature>
<feature type="repeat" description="HEAT 3">
    <location>
        <begin position="926"/>
        <end position="964"/>
    </location>
</feature>
<feature type="repeat" description="HEAT 4">
    <location>
        <begin position="1025"/>
        <end position="1063"/>
    </location>
</feature>
<feature type="repeat" description="HEAT 5">
    <location>
        <begin position="1151"/>
        <end position="1189"/>
    </location>
</feature>
<feature type="repeat" description="HEAT 6">
    <location>
        <begin position="1213"/>
        <end position="1253"/>
    </location>
</feature>
<feature type="region of interest" description="Disordered" evidence="3">
    <location>
        <begin position="299"/>
        <end position="346"/>
    </location>
</feature>
<feature type="region of interest" description="Disordered" evidence="3">
    <location>
        <begin position="359"/>
        <end position="393"/>
    </location>
</feature>
<feature type="compositionally biased region" description="Basic and acidic residues" evidence="3">
    <location>
        <begin position="336"/>
        <end position="346"/>
    </location>
</feature>
<feature type="compositionally biased region" description="Polar residues" evidence="3">
    <location>
        <begin position="363"/>
        <end position="373"/>
    </location>
</feature>
<feature type="compositionally biased region" description="Polar residues" evidence="3">
    <location>
        <begin position="384"/>
        <end position="393"/>
    </location>
</feature>
<feature type="active site" description="Proton acceptor" evidence="2">
    <location>
        <position position="121"/>
    </location>
</feature>
<evidence type="ECO:0000250" key="1">
    <source>
        <dbReference type="UniProtKB" id="Q96C45"/>
    </source>
</evidence>
<evidence type="ECO:0000255" key="2">
    <source>
        <dbReference type="PROSITE-ProRule" id="PRU00159"/>
    </source>
</evidence>
<evidence type="ECO:0000256" key="3">
    <source>
        <dbReference type="SAM" id="MobiDB-lite"/>
    </source>
</evidence>
<protein>
    <recommendedName>
        <fullName>Serine/threonine-protein kinase ULK4</fullName>
        <ecNumber>2.7.11.1</ecNumber>
    </recommendedName>
    <alternativeName>
        <fullName>Unc-51-like kinase 4</fullName>
    </alternativeName>
</protein>
<comment type="function">
    <text evidence="1">May be involved in the remodeling of cytoskeletal components, such as alpha-tubulin, and in this way regulates neurite branching and elongation, as well as cell motility.</text>
</comment>
<comment type="catalytic activity">
    <reaction>
        <text>L-seryl-[protein] + ATP = O-phospho-L-seryl-[protein] + ADP + H(+)</text>
        <dbReference type="Rhea" id="RHEA:17989"/>
        <dbReference type="Rhea" id="RHEA-COMP:9863"/>
        <dbReference type="Rhea" id="RHEA-COMP:11604"/>
        <dbReference type="ChEBI" id="CHEBI:15378"/>
        <dbReference type="ChEBI" id="CHEBI:29999"/>
        <dbReference type="ChEBI" id="CHEBI:30616"/>
        <dbReference type="ChEBI" id="CHEBI:83421"/>
        <dbReference type="ChEBI" id="CHEBI:456216"/>
        <dbReference type="EC" id="2.7.11.1"/>
    </reaction>
</comment>
<comment type="catalytic activity">
    <reaction>
        <text>L-threonyl-[protein] + ATP = O-phospho-L-threonyl-[protein] + ADP + H(+)</text>
        <dbReference type="Rhea" id="RHEA:46608"/>
        <dbReference type="Rhea" id="RHEA-COMP:11060"/>
        <dbReference type="Rhea" id="RHEA-COMP:11605"/>
        <dbReference type="ChEBI" id="CHEBI:15378"/>
        <dbReference type="ChEBI" id="CHEBI:30013"/>
        <dbReference type="ChEBI" id="CHEBI:30616"/>
        <dbReference type="ChEBI" id="CHEBI:61977"/>
        <dbReference type="ChEBI" id="CHEBI:456216"/>
        <dbReference type="EC" id="2.7.11.1"/>
    </reaction>
</comment>
<comment type="similarity">
    <text evidence="2">Belongs to the protein kinase superfamily. Ser/Thr protein kinase family. APG1/unc-51/ULK1 subfamily.</text>
</comment>
<gene>
    <name type="primary">ULK4</name>
</gene>
<dbReference type="EC" id="2.7.11.1"/>
<dbReference type="EMBL" id="CR861224">
    <property type="protein sequence ID" value="CAH93294.1"/>
    <property type="molecule type" value="mRNA"/>
</dbReference>
<dbReference type="RefSeq" id="NP_001126939.1">
    <property type="nucleotide sequence ID" value="NM_001133467.1"/>
</dbReference>
<dbReference type="SMR" id="Q5R4M2"/>
<dbReference type="FunCoup" id="Q5R4M2">
    <property type="interactions" value="1068"/>
</dbReference>
<dbReference type="STRING" id="9601.ENSPPYP00000015642"/>
<dbReference type="GeneID" id="100173957"/>
<dbReference type="KEGG" id="pon:100173957"/>
<dbReference type="CTD" id="54986"/>
<dbReference type="eggNOG" id="KOG0597">
    <property type="taxonomic scope" value="Eukaryota"/>
</dbReference>
<dbReference type="InParanoid" id="Q5R4M2"/>
<dbReference type="OrthoDB" id="24822at2759"/>
<dbReference type="Proteomes" id="UP000001595">
    <property type="component" value="Unplaced"/>
</dbReference>
<dbReference type="GO" id="GO:0005524">
    <property type="term" value="F:ATP binding"/>
    <property type="evidence" value="ECO:0007669"/>
    <property type="project" value="UniProtKB-KW"/>
</dbReference>
<dbReference type="GO" id="GO:0106310">
    <property type="term" value="F:protein serine kinase activity"/>
    <property type="evidence" value="ECO:0007669"/>
    <property type="project" value="RHEA"/>
</dbReference>
<dbReference type="GO" id="GO:0004674">
    <property type="term" value="F:protein serine/threonine kinase activity"/>
    <property type="evidence" value="ECO:0007669"/>
    <property type="project" value="UniProtKB-KW"/>
</dbReference>
<dbReference type="CDD" id="cd14010">
    <property type="entry name" value="STKc_ULK4"/>
    <property type="match status" value="1"/>
</dbReference>
<dbReference type="FunFam" id="1.10.510.10:FF:000686">
    <property type="entry name" value="Serine/threonine-protein kinase ULK4"/>
    <property type="match status" value="1"/>
</dbReference>
<dbReference type="FunFam" id="1.25.10.10:FF:000231">
    <property type="entry name" value="serine/threonine-protein kinase ULK4 isoform X1"/>
    <property type="match status" value="1"/>
</dbReference>
<dbReference type="Gene3D" id="1.25.10.10">
    <property type="entry name" value="Leucine-rich Repeat Variant"/>
    <property type="match status" value="2"/>
</dbReference>
<dbReference type="Gene3D" id="1.10.510.10">
    <property type="entry name" value="Transferase(Phosphotransferase) domain 1"/>
    <property type="match status" value="1"/>
</dbReference>
<dbReference type="InterPro" id="IPR011989">
    <property type="entry name" value="ARM-like"/>
</dbReference>
<dbReference type="InterPro" id="IPR016024">
    <property type="entry name" value="ARM-type_fold"/>
</dbReference>
<dbReference type="InterPro" id="IPR056981">
    <property type="entry name" value="HEAT_ULK4_RUNKEL"/>
</dbReference>
<dbReference type="InterPro" id="IPR011009">
    <property type="entry name" value="Kinase-like_dom_sf"/>
</dbReference>
<dbReference type="InterPro" id="IPR000719">
    <property type="entry name" value="Prot_kinase_dom"/>
</dbReference>
<dbReference type="InterPro" id="IPR045906">
    <property type="entry name" value="ULK4"/>
</dbReference>
<dbReference type="PANTHER" id="PTHR46240">
    <property type="entry name" value="SER/THR PROTEIN KINASE ULK4"/>
    <property type="match status" value="1"/>
</dbReference>
<dbReference type="PANTHER" id="PTHR46240:SF1">
    <property type="entry name" value="SERINE_THREONINE-PROTEIN KINASE ULK4"/>
    <property type="match status" value="1"/>
</dbReference>
<dbReference type="Pfam" id="PF23606">
    <property type="entry name" value="HEAT_ULK4"/>
    <property type="match status" value="1"/>
</dbReference>
<dbReference type="Pfam" id="PF00069">
    <property type="entry name" value="Pkinase"/>
    <property type="match status" value="1"/>
</dbReference>
<dbReference type="SUPFAM" id="SSF48371">
    <property type="entry name" value="ARM repeat"/>
    <property type="match status" value="1"/>
</dbReference>
<dbReference type="SUPFAM" id="SSF56112">
    <property type="entry name" value="Protein kinase-like (PK-like)"/>
    <property type="match status" value="1"/>
</dbReference>
<dbReference type="PROSITE" id="PS50011">
    <property type="entry name" value="PROTEIN_KINASE_DOM"/>
    <property type="match status" value="1"/>
</dbReference>
<proteinExistence type="evidence at transcript level"/>
<name>ULK4_PONAB</name>
<accession>Q5R4M2</accession>
<reference key="1">
    <citation type="submission" date="2004-11" db="EMBL/GenBank/DDBJ databases">
        <authorList>
            <consortium name="The German cDNA consortium"/>
        </authorList>
    </citation>
    <scope>NUCLEOTIDE SEQUENCE [LARGE SCALE MRNA]</scope>
    <source>
        <tissue>Brain cortex</tissue>
    </source>
</reference>